<keyword id="KW-0002">3D-structure</keyword>
<keyword id="KW-0007">Acetylation</keyword>
<keyword id="KW-0025">Alternative splicing</keyword>
<keyword id="KW-0963">Cytoplasm</keyword>
<keyword id="KW-0945">Host-virus interaction</keyword>
<keyword id="KW-0488">Methylation</keyword>
<keyword id="KW-1267">Proteomics identification</keyword>
<keyword id="KW-1185">Reference proteome</keyword>
<keyword id="KW-0810">Translation regulation</keyword>
<name>PAIP1_HUMAN</name>
<sequence length="479" mass="53525">MSDGFDRAPGAGRGRSRGLGRGGGGPEGGGFPNGAGPAERARHQPPQPKAPGFLQPPPLRQPRTTPPPGAQCEVPASPQRPSRPGALPEQTRPLRAPPSSQDKIPQQNSESAMAKPQVVVAPVLMSKLSVNAPEFYPSGYSSSYTESYEDGCEDYPTLSEYVQDFLNHLTEQPGSFETEIEQFAETLNGCVTTDDALQELVELIYQQATSIPNFSYMGARLCNYLSHHLTISPQSGNFRQLLLQRCRTEYEVKDQAAKGDEVTRKRFHAFVLFLGELYLNLEIKGTNGQVTRADILQVGLRELLNALFSNPMDDNLICAVKLLKLTGSVLEDAWKEKGKMDMEEIIQRIENVVLDANCSRDVKQMLLKLVELRSSNWGRVHATSTYREATPENDPNYFMNEPTFYTSDGVPFTAADPDYQEKYQELLEREDFFPDYEENGTDLSGAGDPYLDDIDDEMDPEIEEAYEKFCLESERKRKQ</sequence>
<comment type="function">
    <text evidence="3 8">Acts as a coactivator in the regulation of translation initiation of poly(A)-containing mRNAs. Its stimulatory activity on translation is mediated via its action on PABPC1. Competes with PAIP2 for binding to PABPC1. Its association with EIF4A and PABPC1 may potentiate contacts between mRNA termini. May also be involved in translationally coupled mRNA turnover. Implicated with other RNA-binding proteins in the cytoplasmic deadenylation/translational and decay interplay of the FOS mRNA mediated by the major coding-region determinant of instability (mCRD) domain.</text>
</comment>
<comment type="function">
    <text evidence="6">(Microbial infection) Upon interaction with SARS coronavirus SARS-CoV NSP3 protein, plays an important role in viral protein synthesis.</text>
</comment>
<comment type="subunit">
    <text evidence="2 3 4 5 6 8">Interacts with the RRM1-RRM2 and C-terminus regions of PABPC1 in a 1:1 stoichiometry. Interacts with EIF4A.</text>
</comment>
<comment type="subunit">
    <text evidence="6">(Microbial infection) Interacts (via PAIP1M) with human SARS coronaviruses SARS-COV and SARS-COV-2 NSP3 protein (via SARS-unique domain); the interaction increases binding affinity with PABPC1.</text>
</comment>
<comment type="interaction">
    <interactant intactId="EBI-81519">
        <id>Q9H074</id>
    </interactant>
    <interactant intactId="EBI-81531">
        <id>P11940</id>
        <label>PABPC1</label>
    </interactant>
    <organismsDiffer>false</organismsDiffer>
    <experiments>18</experiments>
</comment>
<comment type="interaction">
    <interactant intactId="EBI-12101100">
        <id>Q9H074-2</id>
    </interactant>
    <interactant intactId="EBI-298355">
        <id>P10242</id>
        <label>MYB</label>
    </interactant>
    <organismsDiffer>false</organismsDiffer>
    <experiments>3</experiments>
</comment>
<comment type="interaction">
    <interactant intactId="EBI-12101100">
        <id>Q9H074-2</id>
    </interactant>
    <interactant intactId="EBI-25635190">
        <id>PRO_0000338257</id>
        <label>1a</label>
        <dbReference type="UniProtKB" id="P0C6U8"/>
    </interactant>
    <organismsDiffer>true</organismsDiffer>
    <experiments>7</experiments>
</comment>
<comment type="subcellular location">
    <subcellularLocation>
        <location evidence="12">Cytoplasm</location>
    </subcellularLocation>
</comment>
<comment type="alternative products">
    <event type="alternative splicing"/>
    <isoform>
        <id>Q9H074-1</id>
        <name>1</name>
        <sequence type="displayed"/>
    </isoform>
    <isoform>
        <id>Q9H074-2</id>
        <name>2</name>
        <sequence type="described" ref="VSP_010005"/>
    </isoform>
    <isoform>
        <id>Q9H074-3</id>
        <name>3</name>
        <sequence type="described" ref="VSP_047503"/>
    </isoform>
</comment>
<comment type="domain">
    <text>Only the PABPC1-interacting motif-1 (PAM1) stimulates translation initiation.</text>
</comment>
<organism>
    <name type="scientific">Homo sapiens</name>
    <name type="common">Human</name>
    <dbReference type="NCBI Taxonomy" id="9606"/>
    <lineage>
        <taxon>Eukaryota</taxon>
        <taxon>Metazoa</taxon>
        <taxon>Chordata</taxon>
        <taxon>Craniata</taxon>
        <taxon>Vertebrata</taxon>
        <taxon>Euteleostomi</taxon>
        <taxon>Mammalia</taxon>
        <taxon>Eutheria</taxon>
        <taxon>Euarchontoglires</taxon>
        <taxon>Primates</taxon>
        <taxon>Haplorrhini</taxon>
        <taxon>Catarrhini</taxon>
        <taxon>Hominidae</taxon>
        <taxon>Homo</taxon>
    </lineage>
</organism>
<evidence type="ECO:0000256" key="1">
    <source>
        <dbReference type="SAM" id="MobiDB-lite"/>
    </source>
</evidence>
<evidence type="ECO:0000269" key="2">
    <source>
    </source>
</evidence>
<evidence type="ECO:0000269" key="3">
    <source>
    </source>
</evidence>
<evidence type="ECO:0000269" key="4">
    <source>
    </source>
</evidence>
<evidence type="ECO:0000269" key="5">
    <source>
    </source>
</evidence>
<evidence type="ECO:0000269" key="6">
    <source>
    </source>
</evidence>
<evidence type="ECO:0000269" key="7">
    <source>
    </source>
</evidence>
<evidence type="ECO:0000269" key="8">
    <source>
    </source>
</evidence>
<evidence type="ECO:0000303" key="9">
    <source>
    </source>
</evidence>
<evidence type="ECO:0000303" key="10">
    <source>
    </source>
</evidence>
<evidence type="ECO:0000303" key="11">
    <source>
    </source>
</evidence>
<evidence type="ECO:0000305" key="12"/>
<evidence type="ECO:0000312" key="13">
    <source>
        <dbReference type="HGNC" id="HGNC:16945"/>
    </source>
</evidence>
<evidence type="ECO:0007744" key="14">
    <source>
    </source>
</evidence>
<evidence type="ECO:0007744" key="15">
    <source>
    </source>
</evidence>
<evidence type="ECO:0007829" key="16">
    <source>
        <dbReference type="PDB" id="3RK6"/>
    </source>
</evidence>
<accession>Q9H074</accession>
<accession>A6NKV8</accession>
<accession>O60455</accession>
<accession>Q96B61</accession>
<accession>Q9BS63</accession>
<feature type="chain" id="PRO_0000058177" description="Polyadenylate-binding protein-interacting protein 1">
    <location>
        <begin position="1"/>
        <end position="479"/>
    </location>
</feature>
<feature type="domain" description="MIF4G">
    <location>
        <begin position="159"/>
        <end position="376"/>
    </location>
</feature>
<feature type="region of interest" description="Disordered" evidence="1">
    <location>
        <begin position="1"/>
        <end position="114"/>
    </location>
</feature>
<feature type="region of interest" description="PABPC1-interacting motif-2 (PAM2)">
    <location>
        <begin position="116"/>
        <end position="143"/>
    </location>
</feature>
<feature type="region of interest" description="PAIP1 middle domain (PAIP1M)" evidence="11">
    <location>
        <begin position="157"/>
        <end position="375"/>
    </location>
</feature>
<feature type="region of interest" description="Disordered" evidence="1">
    <location>
        <begin position="435"/>
        <end position="455"/>
    </location>
</feature>
<feature type="region of interest" description="PABPC1-interacting motif-1 (PAM1)">
    <location>
        <begin position="440"/>
        <end position="479"/>
    </location>
</feature>
<feature type="compositionally biased region" description="Gly residues" evidence="1">
    <location>
        <begin position="11"/>
        <end position="33"/>
    </location>
</feature>
<feature type="compositionally biased region" description="Pro residues" evidence="1">
    <location>
        <begin position="45"/>
        <end position="69"/>
    </location>
</feature>
<feature type="compositionally biased region" description="Polar residues" evidence="1">
    <location>
        <begin position="98"/>
        <end position="111"/>
    </location>
</feature>
<feature type="modified residue" description="Omega-N-methylarginine" evidence="15">
    <location>
        <position position="21"/>
    </location>
</feature>
<feature type="splice variant" id="VSP_047503" description="In isoform 3." evidence="9">
    <location>
        <begin position="1"/>
        <end position="112"/>
    </location>
</feature>
<feature type="splice variant" id="VSP_010005" description="In isoform 2." evidence="10">
    <location>
        <begin position="10"/>
        <end position="88"/>
    </location>
</feature>
<feature type="sequence conflict" description="In Ref. 4; AAH15937." evidence="12" ref="4">
    <original>R</original>
    <variation>C</variation>
    <location>
        <position position="239"/>
    </location>
</feature>
<feature type="helix" evidence="16">
    <location>
        <begin position="158"/>
        <end position="171"/>
    </location>
</feature>
<feature type="helix" evidence="16">
    <location>
        <begin position="173"/>
        <end position="175"/>
    </location>
</feature>
<feature type="helix" evidence="16">
    <location>
        <begin position="176"/>
        <end position="190"/>
    </location>
</feature>
<feature type="helix" evidence="16">
    <location>
        <begin position="194"/>
        <end position="209"/>
    </location>
</feature>
<feature type="helix" evidence="16">
    <location>
        <begin position="215"/>
        <end position="228"/>
    </location>
</feature>
<feature type="helix" evidence="16">
    <location>
        <begin position="238"/>
        <end position="250"/>
    </location>
</feature>
<feature type="helix" evidence="16">
    <location>
        <begin position="253"/>
        <end position="256"/>
    </location>
</feature>
<feature type="helix" evidence="16">
    <location>
        <begin position="261"/>
        <end position="280"/>
    </location>
</feature>
<feature type="strand" evidence="16">
    <location>
        <begin position="288"/>
        <end position="291"/>
    </location>
</feature>
<feature type="helix" evidence="16">
    <location>
        <begin position="294"/>
        <end position="309"/>
    </location>
</feature>
<feature type="helix" evidence="16">
    <location>
        <begin position="313"/>
        <end position="336"/>
    </location>
</feature>
<feature type="helix" evidence="16">
    <location>
        <begin position="341"/>
        <end position="355"/>
    </location>
</feature>
<feature type="helix" evidence="16">
    <location>
        <begin position="360"/>
        <end position="372"/>
    </location>
</feature>
<feature type="initiator methionine" description="Removed" evidence="7 14">
    <location sequence="Q9H074-3">
        <position position="1"/>
    </location>
</feature>
<feature type="modified residue" description="N-acetylalanine" evidence="7 14">
    <location sequence="Q9H074-3">
        <position position="2"/>
    </location>
</feature>
<proteinExistence type="evidence at protein level"/>
<reference key="1">
    <citation type="journal article" date="1998" name="Nature">
        <title>Interaction of polyadenylate-binding protein with the eIF4G homologue PAIP enhances translation.</title>
        <authorList>
            <person name="Craig A.W.B."/>
            <person name="Haghighat A."/>
            <person name="Yu A.T.K."/>
            <person name="Sonenberg N."/>
        </authorList>
    </citation>
    <scope>NUCLEOTIDE SEQUENCE [MRNA] (ISOFORM 1)</scope>
    <scope>FUNCTION IN TRANSLATION INITIATION STIMULATION</scope>
    <scope>INTERACTION WITH PABPC1 AND EIF4A</scope>
    <source>
        <tissue>Placenta</tissue>
    </source>
</reference>
<reference key="2">
    <citation type="journal article" date="2001" name="Genome Res.">
        <title>Towards a catalog of human genes and proteins: sequencing and analysis of 500 novel complete protein coding human cDNAs.</title>
        <authorList>
            <person name="Wiemann S."/>
            <person name="Weil B."/>
            <person name="Wellenreuther R."/>
            <person name="Gassenhuber J."/>
            <person name="Glassl S."/>
            <person name="Ansorge W."/>
            <person name="Boecher M."/>
            <person name="Bloecker H."/>
            <person name="Bauersachs S."/>
            <person name="Blum H."/>
            <person name="Lauber J."/>
            <person name="Duesterhoeft A."/>
            <person name="Beyer A."/>
            <person name="Koehrer K."/>
            <person name="Strack N."/>
            <person name="Mewes H.-W."/>
            <person name="Ottenwaelder B."/>
            <person name="Obermaier B."/>
            <person name="Tampe J."/>
            <person name="Heubner D."/>
            <person name="Wambutt R."/>
            <person name="Korn B."/>
            <person name="Klein M."/>
            <person name="Poustka A."/>
        </authorList>
    </citation>
    <scope>NUCLEOTIDE SEQUENCE [LARGE SCALE MRNA] (ISOFORM 1)</scope>
    <source>
        <tissue>Uterus</tissue>
    </source>
</reference>
<reference key="3">
    <citation type="journal article" date="2004" name="Nature">
        <title>The DNA sequence and comparative analysis of human chromosome 5.</title>
        <authorList>
            <person name="Schmutz J."/>
            <person name="Martin J."/>
            <person name="Terry A."/>
            <person name="Couronne O."/>
            <person name="Grimwood J."/>
            <person name="Lowry S."/>
            <person name="Gordon L.A."/>
            <person name="Scott D."/>
            <person name="Xie G."/>
            <person name="Huang W."/>
            <person name="Hellsten U."/>
            <person name="Tran-Gyamfi M."/>
            <person name="She X."/>
            <person name="Prabhakar S."/>
            <person name="Aerts A."/>
            <person name="Altherr M."/>
            <person name="Bajorek E."/>
            <person name="Black S."/>
            <person name="Branscomb E."/>
            <person name="Caoile C."/>
            <person name="Challacombe J.F."/>
            <person name="Chan Y.M."/>
            <person name="Denys M."/>
            <person name="Detter J.C."/>
            <person name="Escobar J."/>
            <person name="Flowers D."/>
            <person name="Fotopulos D."/>
            <person name="Glavina T."/>
            <person name="Gomez M."/>
            <person name="Gonzales E."/>
            <person name="Goodstein D."/>
            <person name="Grigoriev I."/>
            <person name="Groza M."/>
            <person name="Hammon N."/>
            <person name="Hawkins T."/>
            <person name="Haydu L."/>
            <person name="Israni S."/>
            <person name="Jett J."/>
            <person name="Kadner K."/>
            <person name="Kimball H."/>
            <person name="Kobayashi A."/>
            <person name="Lopez F."/>
            <person name="Lou Y."/>
            <person name="Martinez D."/>
            <person name="Medina C."/>
            <person name="Morgan J."/>
            <person name="Nandkeshwar R."/>
            <person name="Noonan J.P."/>
            <person name="Pitluck S."/>
            <person name="Pollard M."/>
            <person name="Predki P."/>
            <person name="Priest J."/>
            <person name="Ramirez L."/>
            <person name="Retterer J."/>
            <person name="Rodriguez A."/>
            <person name="Rogers S."/>
            <person name="Salamov A."/>
            <person name="Salazar A."/>
            <person name="Thayer N."/>
            <person name="Tice H."/>
            <person name="Tsai M."/>
            <person name="Ustaszewska A."/>
            <person name="Vo N."/>
            <person name="Wheeler J."/>
            <person name="Wu K."/>
            <person name="Yang J."/>
            <person name="Dickson M."/>
            <person name="Cheng J.-F."/>
            <person name="Eichler E.E."/>
            <person name="Olsen A."/>
            <person name="Pennacchio L.A."/>
            <person name="Rokhsar D.S."/>
            <person name="Richardson P."/>
            <person name="Lucas S.M."/>
            <person name="Myers R.M."/>
            <person name="Rubin E.M."/>
        </authorList>
    </citation>
    <scope>NUCLEOTIDE SEQUENCE [LARGE SCALE GENOMIC DNA]</scope>
</reference>
<reference key="4">
    <citation type="journal article" date="2004" name="Genome Res.">
        <title>The status, quality, and expansion of the NIH full-length cDNA project: the Mammalian Gene Collection (MGC).</title>
        <authorList>
            <consortium name="The MGC Project Team"/>
        </authorList>
    </citation>
    <scope>NUCLEOTIDE SEQUENCE [LARGE SCALE MRNA] (ISOFORMS 1 AND 2)</scope>
    <source>
        <tissue>Kidney</tissue>
        <tissue>Skin</tissue>
    </source>
</reference>
<reference key="5">
    <citation type="journal article" date="2004" name="Nat. Genet.">
        <title>Complete sequencing and characterization of 21,243 full-length human cDNAs.</title>
        <authorList>
            <person name="Ota T."/>
            <person name="Suzuki Y."/>
            <person name="Nishikawa T."/>
            <person name="Otsuki T."/>
            <person name="Sugiyama T."/>
            <person name="Irie R."/>
            <person name="Wakamatsu A."/>
            <person name="Hayashi K."/>
            <person name="Sato H."/>
            <person name="Nagai K."/>
            <person name="Kimura K."/>
            <person name="Makita H."/>
            <person name="Sekine M."/>
            <person name="Obayashi M."/>
            <person name="Nishi T."/>
            <person name="Shibahara T."/>
            <person name="Tanaka T."/>
            <person name="Ishii S."/>
            <person name="Yamamoto J."/>
            <person name="Saito K."/>
            <person name="Kawai Y."/>
            <person name="Isono Y."/>
            <person name="Nakamura Y."/>
            <person name="Nagahari K."/>
            <person name="Murakami K."/>
            <person name="Yasuda T."/>
            <person name="Iwayanagi T."/>
            <person name="Wagatsuma M."/>
            <person name="Shiratori A."/>
            <person name="Sudo H."/>
            <person name="Hosoiri T."/>
            <person name="Kaku Y."/>
            <person name="Kodaira H."/>
            <person name="Kondo H."/>
            <person name="Sugawara M."/>
            <person name="Takahashi M."/>
            <person name="Kanda K."/>
            <person name="Yokoi T."/>
            <person name="Furuya T."/>
            <person name="Kikkawa E."/>
            <person name="Omura Y."/>
            <person name="Abe K."/>
            <person name="Kamihara K."/>
            <person name="Katsuta N."/>
            <person name="Sato K."/>
            <person name="Tanikawa M."/>
            <person name="Yamazaki M."/>
            <person name="Ninomiya K."/>
            <person name="Ishibashi T."/>
            <person name="Yamashita H."/>
            <person name="Murakawa K."/>
            <person name="Fujimori K."/>
            <person name="Tanai H."/>
            <person name="Kimata M."/>
            <person name="Watanabe M."/>
            <person name="Hiraoka S."/>
            <person name="Chiba Y."/>
            <person name="Ishida S."/>
            <person name="Ono Y."/>
            <person name="Takiguchi S."/>
            <person name="Watanabe S."/>
            <person name="Yosida M."/>
            <person name="Hotuta T."/>
            <person name="Kusano J."/>
            <person name="Kanehori K."/>
            <person name="Takahashi-Fujii A."/>
            <person name="Hara H."/>
            <person name="Tanase T.-O."/>
            <person name="Nomura Y."/>
            <person name="Togiya S."/>
            <person name="Komai F."/>
            <person name="Hara R."/>
            <person name="Takeuchi K."/>
            <person name="Arita M."/>
            <person name="Imose N."/>
            <person name="Musashino K."/>
            <person name="Yuuki H."/>
            <person name="Oshima A."/>
            <person name="Sasaki N."/>
            <person name="Aotsuka S."/>
            <person name="Yoshikawa Y."/>
            <person name="Matsunawa H."/>
            <person name="Ichihara T."/>
            <person name="Shiohata N."/>
            <person name="Sano S."/>
            <person name="Moriya S."/>
            <person name="Momiyama H."/>
            <person name="Satoh N."/>
            <person name="Takami S."/>
            <person name="Terashima Y."/>
            <person name="Suzuki O."/>
            <person name="Nakagawa S."/>
            <person name="Senoh A."/>
            <person name="Mizoguchi H."/>
            <person name="Goto Y."/>
            <person name="Shimizu F."/>
            <person name="Wakebe H."/>
            <person name="Hishigaki H."/>
            <person name="Watanabe T."/>
            <person name="Sugiyama A."/>
            <person name="Takemoto M."/>
            <person name="Kawakami B."/>
            <person name="Yamazaki M."/>
            <person name="Watanabe K."/>
            <person name="Kumagai A."/>
            <person name="Itakura S."/>
            <person name="Fukuzumi Y."/>
            <person name="Fujimori Y."/>
            <person name="Komiyama M."/>
            <person name="Tashiro H."/>
            <person name="Tanigami A."/>
            <person name="Fujiwara T."/>
            <person name="Ono T."/>
            <person name="Yamada K."/>
            <person name="Fujii Y."/>
            <person name="Ozaki K."/>
            <person name="Hirao M."/>
            <person name="Ohmori Y."/>
            <person name="Kawabata A."/>
            <person name="Hikiji T."/>
            <person name="Kobatake N."/>
            <person name="Inagaki H."/>
            <person name="Ikema Y."/>
            <person name="Okamoto S."/>
            <person name="Okitani R."/>
            <person name="Kawakami T."/>
            <person name="Noguchi S."/>
            <person name="Itoh T."/>
            <person name="Shigeta K."/>
            <person name="Senba T."/>
            <person name="Matsumura K."/>
            <person name="Nakajima Y."/>
            <person name="Mizuno T."/>
            <person name="Morinaga M."/>
            <person name="Sasaki M."/>
            <person name="Togashi T."/>
            <person name="Oyama M."/>
            <person name="Hata H."/>
            <person name="Watanabe M."/>
            <person name="Komatsu T."/>
            <person name="Mizushima-Sugano J."/>
            <person name="Satoh T."/>
            <person name="Shirai Y."/>
            <person name="Takahashi Y."/>
            <person name="Nakagawa K."/>
            <person name="Okumura K."/>
            <person name="Nagase T."/>
            <person name="Nomura N."/>
            <person name="Kikuchi H."/>
            <person name="Masuho Y."/>
            <person name="Yamashita R."/>
            <person name="Nakai K."/>
            <person name="Yada T."/>
            <person name="Nakamura Y."/>
            <person name="Ohara O."/>
            <person name="Isogai T."/>
            <person name="Sugano S."/>
        </authorList>
    </citation>
    <scope>NUCLEOTIDE SEQUENCE [LARGE SCALE MRNA] OF 1-249 (ISOFORM 3)</scope>
</reference>
<reference key="6">
    <citation type="journal article" date="2000" name="Cell">
        <title>A mechanism for translationally coupled mRNA turnover: interaction between the poly(A) tail and a c-fos RNA coding determinant via a protein complex.</title>
        <authorList>
            <person name="Grosset C."/>
            <person name="Chen C.-Y.A."/>
            <person name="Xu N."/>
            <person name="Sonenberg N."/>
            <person name="Jacquemin-Sablon H."/>
            <person name="Shyu A.-B."/>
        </authorList>
    </citation>
    <scope>FUNCTION IN TRANSLATIONALLY COUPLED MRNA TURNOVER</scope>
    <scope>IDENTIFICATION IN A COMPLEX WITH HNRPD; SYNCRIP; PABPC1 AND UNR</scope>
</reference>
<reference key="7">
    <citation type="journal article" date="2000" name="EMBO J.">
        <title>Multiple portions of poly(A)-binding protein stimulate translation in vivo.</title>
        <authorList>
            <person name="Gray N.K."/>
            <person name="Coller J.M."/>
            <person name="Dickson K.S."/>
            <person name="Wickens M."/>
        </authorList>
    </citation>
    <scope>INTERACTION WITH PABPC1</scope>
</reference>
<reference key="8">
    <citation type="journal article" date="2001" name="Mol. Cell">
        <title>Translational repression by a novel partner of human poly(A) binding protein, Paip2.</title>
        <authorList>
            <person name="Khaleghpour K."/>
            <person name="Svitkin Y.V."/>
            <person name="Craig A.W.B."/>
            <person name="DeMaria C.T."/>
            <person name="Deo R.C."/>
            <person name="Burley S.K."/>
            <person name="Sonenberg N."/>
        </authorList>
    </citation>
    <scope>INTERACTION WITH PABPC1</scope>
</reference>
<reference key="9">
    <citation type="journal article" date="2002" name="Mol. Cell. Biol.">
        <title>Paip1 interacts with poly(A) binding protein through two independent binding motifs.</title>
        <authorList>
            <person name="Roy G."/>
            <person name="De Crescenzo G."/>
            <person name="Khaleghpour K."/>
            <person name="Kahvejian A."/>
            <person name="O'Connor-McCourt M."/>
            <person name="Sonenberg N."/>
        </authorList>
    </citation>
    <scope>INTERACTION WITH PABPC1</scope>
</reference>
<reference key="10">
    <citation type="journal article" date="2011" name="BMC Syst. Biol.">
        <title>Initial characterization of the human central proteome.</title>
        <authorList>
            <person name="Burkard T.R."/>
            <person name="Planyavsky M."/>
            <person name="Kaupe I."/>
            <person name="Breitwieser F.P."/>
            <person name="Buerckstuemmer T."/>
            <person name="Bennett K.L."/>
            <person name="Superti-Furga G."/>
            <person name="Colinge J."/>
        </authorList>
    </citation>
    <scope>IDENTIFICATION BY MASS SPECTROMETRY [LARGE SCALE ANALYSIS]</scope>
</reference>
<reference key="11">
    <citation type="journal article" date="2012" name="Mol. Cell. Proteomics">
        <title>Comparative large-scale characterisation of plant vs. mammal proteins reveals similar and idiosyncratic N-alpha acetylation features.</title>
        <authorList>
            <person name="Bienvenut W.V."/>
            <person name="Sumpton D."/>
            <person name="Martinez A."/>
            <person name="Lilla S."/>
            <person name="Espagne C."/>
            <person name="Meinnel T."/>
            <person name="Giglione C."/>
        </authorList>
    </citation>
    <scope>ACETYLATION [LARGE SCALE ANALYSIS] AT ALA-2 (ISOFORM 3)</scope>
    <scope>CLEAVAGE OF INITIATOR METHIONINE [LARGE SCALE ANALYSIS] (ISOFORM 3)</scope>
    <scope>IDENTIFICATION BY MASS SPECTROMETRY [LARGE SCALE ANALYSIS]</scope>
</reference>
<reference key="12">
    <citation type="journal article" date="2014" name="Mol. Cell. Proteomics">
        <title>Immunoaffinity enrichment and mass spectrometry analysis of protein methylation.</title>
        <authorList>
            <person name="Guo A."/>
            <person name="Gu H."/>
            <person name="Zhou J."/>
            <person name="Mulhern D."/>
            <person name="Wang Y."/>
            <person name="Lee K.A."/>
            <person name="Yang V."/>
            <person name="Aguiar M."/>
            <person name="Kornhauser J."/>
            <person name="Jia X."/>
            <person name="Ren J."/>
            <person name="Beausoleil S.A."/>
            <person name="Silva J.C."/>
            <person name="Vemulapalli V."/>
            <person name="Bedford M.T."/>
            <person name="Comb M.J."/>
        </authorList>
    </citation>
    <scope>METHYLATION [LARGE SCALE ANALYSIS] AT ARG-21</scope>
    <scope>IDENTIFICATION BY MASS SPECTROMETRY [LARGE SCALE ANALYSIS]</scope>
    <source>
        <tissue>Colon carcinoma</tissue>
    </source>
</reference>
<reference key="13">
    <citation type="journal article" date="2023" name="Life. Sci Alliance">
        <title>N-terminal proteoforms may engage in different protein complexes.</title>
        <authorList>
            <person name="Bogaert A."/>
            <person name="Fijalkowska D."/>
            <person name="Staes A."/>
            <person name="Van de Steene T."/>
            <person name="Vuylsteke M."/>
            <person name="Stadler C."/>
            <person name="Eyckerman S."/>
            <person name="Spirohn K."/>
            <person name="Hao T."/>
            <person name="Calderwood M.A."/>
            <person name="Gevaert K."/>
        </authorList>
    </citation>
    <scope>CLEAVAGE OF INITIATOR METHIONINE (ISOFORM 3)</scope>
    <scope>ACETYLATION AT ALA-2 (ISOFORM 3)</scope>
</reference>
<reference key="14">
    <citation type="journal article" date="2021" name="EMBO J.">
        <title>The SARS-unique domain (SUD) of SARS-CoV and SARS-CoV-2 interacts with human Paip1 to enhance viral RNA translation.</title>
        <authorList>
            <person name="Lei J."/>
            <person name="Ma-Lauer Y."/>
            <person name="Han Y."/>
            <person name="Thoms M."/>
            <person name="Buschauer R."/>
            <person name="Jores J."/>
            <person name="Thiel V."/>
            <person name="Beckmann R."/>
            <person name="Deng W."/>
            <person name="Leonhardt H."/>
            <person name="Hilgenfeld R."/>
            <person name="von Brunn A."/>
        </authorList>
    </citation>
    <scope>X-RAY CRYSTALLOGRAPHY (3.5 ANGSTROMS) OF 157-375 IN COMPLEX WITH SARS-COV NSP3 PROTEIN</scope>
    <scope>INTERACTION WITH SARS-COV AND SARS-COV2 NSP3 PROTEIN (MICROBIAL INFECTION)</scope>
    <scope>FUNCTION (MICROBIAL INFECTION)</scope>
    <scope>INTERACTION WITH PABPC1</scope>
</reference>
<dbReference type="EMBL" id="AF013758">
    <property type="protein sequence ID" value="AAC39697.2"/>
    <property type="molecule type" value="mRNA"/>
</dbReference>
<dbReference type="EMBL" id="AL136920">
    <property type="protein sequence ID" value="CAB66854.1"/>
    <property type="molecule type" value="mRNA"/>
</dbReference>
<dbReference type="EMBL" id="AC114956">
    <property type="status" value="NOT_ANNOTATED_CDS"/>
    <property type="molecule type" value="Genomic_DNA"/>
</dbReference>
<dbReference type="EMBL" id="BC005295">
    <property type="protein sequence ID" value="AAH05295.1"/>
    <property type="molecule type" value="mRNA"/>
</dbReference>
<dbReference type="EMBL" id="BC015937">
    <property type="protein sequence ID" value="AAH15937.1"/>
    <property type="molecule type" value="mRNA"/>
</dbReference>
<dbReference type="EMBL" id="DB089732">
    <property type="status" value="NOT_ANNOTATED_CDS"/>
    <property type="molecule type" value="mRNA"/>
</dbReference>
<dbReference type="CCDS" id="CCDS3947.1">
    <molecule id="Q9H074-1"/>
</dbReference>
<dbReference type="CCDS" id="CCDS3948.1">
    <molecule id="Q9H074-3"/>
</dbReference>
<dbReference type="CCDS" id="CCDS47204.1">
    <molecule id="Q9H074-2"/>
</dbReference>
<dbReference type="RefSeq" id="NP_006442.2">
    <molecule id="Q9H074-1"/>
    <property type="nucleotide sequence ID" value="NM_006451.4"/>
</dbReference>
<dbReference type="RefSeq" id="NP_877590.1">
    <molecule id="Q9H074-2"/>
    <property type="nucleotide sequence ID" value="NM_182789.4"/>
</dbReference>
<dbReference type="RefSeq" id="NP_899152.1">
    <molecule id="Q9H074-3"/>
    <property type="nucleotide sequence ID" value="NM_183323.3"/>
</dbReference>
<dbReference type="RefSeq" id="XP_005248287.1">
    <property type="nucleotide sequence ID" value="XM_005248230.3"/>
</dbReference>
<dbReference type="RefSeq" id="XP_016864445.1">
    <property type="nucleotide sequence ID" value="XM_017008956.1"/>
</dbReference>
<dbReference type="PDB" id="1JH4">
    <property type="method" value="NMR"/>
    <property type="chains" value="B=123-144"/>
</dbReference>
<dbReference type="PDB" id="3NTW">
    <property type="method" value="X-ray"/>
    <property type="resolution" value="2.60 A"/>
    <property type="chains" value="B/D=123-144"/>
</dbReference>
<dbReference type="PDB" id="3RK6">
    <property type="method" value="X-ray"/>
    <property type="resolution" value="2.00 A"/>
    <property type="chains" value="A/B=157-373"/>
</dbReference>
<dbReference type="PDB" id="6YXJ">
    <property type="method" value="X-ray"/>
    <property type="resolution" value="3.50 A"/>
    <property type="chains" value="B=157-375"/>
</dbReference>
<dbReference type="PDBsum" id="1JH4"/>
<dbReference type="PDBsum" id="3NTW"/>
<dbReference type="PDBsum" id="3RK6"/>
<dbReference type="PDBsum" id="6YXJ"/>
<dbReference type="BMRB" id="Q9H074"/>
<dbReference type="SMR" id="Q9H074"/>
<dbReference type="BioGRID" id="115851">
    <property type="interactions" value="156"/>
</dbReference>
<dbReference type="ComplexPortal" id="CPX-1076">
    <property type="entry name" value="mCRD-poly(A)-bridging complex"/>
</dbReference>
<dbReference type="CORUM" id="Q9H074"/>
<dbReference type="ELM" id="Q9H074"/>
<dbReference type="FunCoup" id="Q9H074">
    <property type="interactions" value="3143"/>
</dbReference>
<dbReference type="IntAct" id="Q9H074">
    <property type="interactions" value="95"/>
</dbReference>
<dbReference type="MINT" id="Q9H074"/>
<dbReference type="STRING" id="9606.ENSP00000302768"/>
<dbReference type="GlyGen" id="Q9H074">
    <property type="glycosylation" value="1 site, 1 O-linked glycan (1 site)"/>
</dbReference>
<dbReference type="iPTMnet" id="Q9H074"/>
<dbReference type="MetOSite" id="Q9H074"/>
<dbReference type="PhosphoSitePlus" id="Q9H074"/>
<dbReference type="SwissPalm" id="Q9H074"/>
<dbReference type="BioMuta" id="PAIP1"/>
<dbReference type="DMDM" id="46397025"/>
<dbReference type="jPOST" id="Q9H074"/>
<dbReference type="MassIVE" id="Q9H074"/>
<dbReference type="PaxDb" id="9606-ENSP00000302768"/>
<dbReference type="PeptideAtlas" id="Q9H074"/>
<dbReference type="ProteomicsDB" id="1433"/>
<dbReference type="ProteomicsDB" id="80210">
    <molecule id="Q9H074-1"/>
</dbReference>
<dbReference type="ProteomicsDB" id="80211">
    <molecule id="Q9H074-2"/>
</dbReference>
<dbReference type="Pumba" id="Q9H074"/>
<dbReference type="Antibodypedia" id="10789">
    <property type="antibodies" value="203 antibodies from 28 providers"/>
</dbReference>
<dbReference type="DNASU" id="10605"/>
<dbReference type="Ensembl" id="ENST00000306846.8">
    <molecule id="Q9H074-1"/>
    <property type="protein sequence ID" value="ENSP00000302768.3"/>
    <property type="gene ID" value="ENSG00000172239.14"/>
</dbReference>
<dbReference type="Ensembl" id="ENST00000338972.8">
    <molecule id="Q9H074-3"/>
    <property type="protein sequence ID" value="ENSP00000339622.4"/>
    <property type="gene ID" value="ENSG00000172239.14"/>
</dbReference>
<dbReference type="Ensembl" id="ENST00000436644.6">
    <molecule id="Q9H074-2"/>
    <property type="protein sequence ID" value="ENSP00000387729.2"/>
    <property type="gene ID" value="ENSG00000172239.14"/>
</dbReference>
<dbReference type="GeneID" id="10605"/>
<dbReference type="KEGG" id="hsa:10605"/>
<dbReference type="MANE-Select" id="ENST00000306846.8">
    <property type="protein sequence ID" value="ENSP00000302768.3"/>
    <property type="RefSeq nucleotide sequence ID" value="NM_006451.5"/>
    <property type="RefSeq protein sequence ID" value="NP_006442.2"/>
</dbReference>
<dbReference type="UCSC" id="uc003joa.4">
    <molecule id="Q9H074-1"/>
    <property type="organism name" value="human"/>
</dbReference>
<dbReference type="AGR" id="HGNC:16945"/>
<dbReference type="CTD" id="10605"/>
<dbReference type="DisGeNET" id="10605"/>
<dbReference type="GeneCards" id="PAIP1"/>
<dbReference type="HGNC" id="HGNC:16945">
    <property type="gene designation" value="PAIP1"/>
</dbReference>
<dbReference type="HPA" id="ENSG00000172239">
    <property type="expression patterns" value="Low tissue specificity"/>
</dbReference>
<dbReference type="MIM" id="605184">
    <property type="type" value="gene"/>
</dbReference>
<dbReference type="neXtProt" id="NX_Q9H074"/>
<dbReference type="OpenTargets" id="ENSG00000172239"/>
<dbReference type="PharmGKB" id="PA134941557"/>
<dbReference type="VEuPathDB" id="HostDB:ENSG00000172239"/>
<dbReference type="eggNOG" id="KOG0401">
    <property type="taxonomic scope" value="Eukaryota"/>
</dbReference>
<dbReference type="GeneTree" id="ENSGT00940000153432"/>
<dbReference type="HOGENOM" id="CLU_044856_1_0_1"/>
<dbReference type="InParanoid" id="Q9H074"/>
<dbReference type="OMA" id="EQPACFE"/>
<dbReference type="OrthoDB" id="8171816at2759"/>
<dbReference type="PAN-GO" id="Q9H074">
    <property type="GO annotations" value="2 GO annotations based on evolutionary models"/>
</dbReference>
<dbReference type="PhylomeDB" id="Q9H074"/>
<dbReference type="TreeFam" id="TF325625"/>
<dbReference type="PathwayCommons" id="Q9H074"/>
<dbReference type="Reactome" id="R-HSA-429947">
    <property type="pathway name" value="Deadenylation of mRNA"/>
</dbReference>
<dbReference type="Reactome" id="R-HSA-9820841">
    <property type="pathway name" value="M-decay: degradation of maternal mRNAs by maternally stored factors"/>
</dbReference>
<dbReference type="Reactome" id="R-HSA-9820865">
    <property type="pathway name" value="Z-decay: degradation of maternal mRNAs by zygotically expressed factors"/>
</dbReference>
<dbReference type="SignaLink" id="Q9H074"/>
<dbReference type="SIGNOR" id="Q9H074"/>
<dbReference type="BioGRID-ORCS" id="10605">
    <property type="hits" value="44 hits in 1156 CRISPR screens"/>
</dbReference>
<dbReference type="ChiTaRS" id="PAIP1">
    <property type="organism name" value="human"/>
</dbReference>
<dbReference type="EvolutionaryTrace" id="Q9H074"/>
<dbReference type="GeneWiki" id="PAIP1"/>
<dbReference type="GenomeRNAi" id="10605"/>
<dbReference type="Pharos" id="Q9H074">
    <property type="development level" value="Tbio"/>
</dbReference>
<dbReference type="PRO" id="PR:Q9H074"/>
<dbReference type="Proteomes" id="UP000005640">
    <property type="component" value="Chromosome 5"/>
</dbReference>
<dbReference type="RNAct" id="Q9H074">
    <property type="molecule type" value="protein"/>
</dbReference>
<dbReference type="Bgee" id="ENSG00000172239">
    <property type="expression patterns" value="Expressed in cortical plate and 104 other cell types or tissues"/>
</dbReference>
<dbReference type="ExpressionAtlas" id="Q9H074">
    <property type="expression patterns" value="baseline and differential"/>
</dbReference>
<dbReference type="GO" id="GO:0005737">
    <property type="term" value="C:cytoplasm"/>
    <property type="evidence" value="ECO:0000304"/>
    <property type="project" value="ProtInc"/>
</dbReference>
<dbReference type="GO" id="GO:0005829">
    <property type="term" value="C:cytosol"/>
    <property type="evidence" value="ECO:0000314"/>
    <property type="project" value="ComplexPortal"/>
</dbReference>
<dbReference type="GO" id="GO:0106002">
    <property type="term" value="C:mCRD-mediated mRNA stability complex"/>
    <property type="evidence" value="ECO:0000353"/>
    <property type="project" value="ComplexPortal"/>
</dbReference>
<dbReference type="GO" id="GO:0003723">
    <property type="term" value="F:RNA binding"/>
    <property type="evidence" value="ECO:0000304"/>
    <property type="project" value="ProtInc"/>
</dbReference>
<dbReference type="GO" id="GO:0008494">
    <property type="term" value="F:translation activator activity"/>
    <property type="evidence" value="ECO:0000314"/>
    <property type="project" value="UniProtKB"/>
</dbReference>
<dbReference type="GO" id="GO:0070934">
    <property type="term" value="P:CRD-mediated mRNA stabilization"/>
    <property type="evidence" value="ECO:0000314"/>
    <property type="project" value="ComplexPortal"/>
</dbReference>
<dbReference type="GO" id="GO:0048255">
    <property type="term" value="P:mRNA stabilization"/>
    <property type="evidence" value="ECO:0000304"/>
    <property type="project" value="UniProtKB"/>
</dbReference>
<dbReference type="GO" id="GO:1900152">
    <property type="term" value="P:negative regulation of nuclear-transcribed mRNA catabolic process, deadenylation-dependent decay"/>
    <property type="evidence" value="ECO:0000314"/>
    <property type="project" value="ComplexPortal"/>
</dbReference>
<dbReference type="GO" id="GO:0044794">
    <property type="term" value="P:positive regulation by host of viral process"/>
    <property type="evidence" value="ECO:0000314"/>
    <property type="project" value="UniProtKB"/>
</dbReference>
<dbReference type="GO" id="GO:2000767">
    <property type="term" value="P:positive regulation of cytoplasmic translation"/>
    <property type="evidence" value="ECO:0000314"/>
    <property type="project" value="ComplexPortal"/>
</dbReference>
<dbReference type="GO" id="GO:0006446">
    <property type="term" value="P:regulation of translational initiation"/>
    <property type="evidence" value="ECO:0000318"/>
    <property type="project" value="GO_Central"/>
</dbReference>
<dbReference type="GO" id="GO:0006413">
    <property type="term" value="P:translational initiation"/>
    <property type="evidence" value="ECO:0000304"/>
    <property type="project" value="ProtInc"/>
</dbReference>
<dbReference type="FunFam" id="1.25.40.180:FF:000016">
    <property type="entry name" value="polyadenylate-binding protein-interacting protein 1 isoform X1"/>
    <property type="match status" value="1"/>
</dbReference>
<dbReference type="Gene3D" id="1.25.40.180">
    <property type="match status" value="1"/>
</dbReference>
<dbReference type="IDEAL" id="IID00586"/>
<dbReference type="InterPro" id="IPR016024">
    <property type="entry name" value="ARM-type_fold"/>
</dbReference>
<dbReference type="InterPro" id="IPR003890">
    <property type="entry name" value="MIF4G-like_typ-3"/>
</dbReference>
<dbReference type="InterPro" id="IPR051367">
    <property type="entry name" value="mRNA_TranslReg/HistoneTransl"/>
</dbReference>
<dbReference type="InterPro" id="IPR009818">
    <property type="entry name" value="PAM2_motif"/>
</dbReference>
<dbReference type="PANTHER" id="PTHR23254">
    <property type="entry name" value="EIF4G DOMAIN PROTEIN"/>
    <property type="match status" value="1"/>
</dbReference>
<dbReference type="PANTHER" id="PTHR23254:SF15">
    <property type="entry name" value="POLYADENYLATE-BINDING PROTEIN-INTERACTING PROTEIN 1"/>
    <property type="match status" value="1"/>
</dbReference>
<dbReference type="Pfam" id="PF02854">
    <property type="entry name" value="MIF4G"/>
    <property type="match status" value="1"/>
</dbReference>
<dbReference type="Pfam" id="PF07145">
    <property type="entry name" value="PAM2"/>
    <property type="match status" value="1"/>
</dbReference>
<dbReference type="SMART" id="SM00543">
    <property type="entry name" value="MIF4G"/>
    <property type="match status" value="1"/>
</dbReference>
<dbReference type="SUPFAM" id="SSF48371">
    <property type="entry name" value="ARM repeat"/>
    <property type="match status" value="1"/>
</dbReference>
<gene>
    <name evidence="13" type="primary">PAIP1</name>
</gene>
<protein>
    <recommendedName>
        <fullName evidence="12">Polyadenylate-binding protein-interacting protein 1</fullName>
        <shortName>PABP-interacting protein 1</shortName>
        <shortName>PAIP-1</shortName>
        <shortName>Poly(A)-binding protein-interacting protein 1</shortName>
    </recommendedName>
</protein>